<comment type="similarity">
    <text evidence="1">Belongs to the OsmC/Ohr family.</text>
</comment>
<feature type="chain" id="PRO_0000288956" description="Organic hydroperoxide resistance protein-like">
    <location>
        <begin position="1"/>
        <end position="140"/>
    </location>
</feature>
<sequence length="140" mass="15349">MAIHYETKATNVGGRKGHVYTDDRALDIDIVPPAQADGKATNPEQLFAAGYASCFNGAFDLILKQNKVRDAHPEVTLTVRLEDDPDSESPKLSVSIDATIKNVISQEEAEKYLQMAHEFCPYSKATQGNINVDLNVNVVD</sequence>
<protein>
    <recommendedName>
        <fullName>Organic hydroperoxide resistance protein-like</fullName>
    </recommendedName>
</protein>
<gene>
    <name type="ordered locus">SAR0859</name>
</gene>
<name>OHRL_STAAR</name>
<dbReference type="EMBL" id="BX571856">
    <property type="protein sequence ID" value="CAG39868.1"/>
    <property type="molecule type" value="Genomic_DNA"/>
</dbReference>
<dbReference type="RefSeq" id="WP_000974455.1">
    <property type="nucleotide sequence ID" value="NC_002952.2"/>
</dbReference>
<dbReference type="SMR" id="Q6GII8"/>
<dbReference type="KEGG" id="sar:SAR0859"/>
<dbReference type="HOGENOM" id="CLU_106355_2_1_9"/>
<dbReference type="Proteomes" id="UP000000596">
    <property type="component" value="Chromosome"/>
</dbReference>
<dbReference type="GO" id="GO:0006979">
    <property type="term" value="P:response to oxidative stress"/>
    <property type="evidence" value="ECO:0007669"/>
    <property type="project" value="InterPro"/>
</dbReference>
<dbReference type="Gene3D" id="2.20.25.10">
    <property type="match status" value="1"/>
</dbReference>
<dbReference type="Gene3D" id="3.30.300.20">
    <property type="match status" value="1"/>
</dbReference>
<dbReference type="InterPro" id="IPR015946">
    <property type="entry name" value="KH_dom-like_a/b"/>
</dbReference>
<dbReference type="InterPro" id="IPR019953">
    <property type="entry name" value="OHR"/>
</dbReference>
<dbReference type="InterPro" id="IPR003718">
    <property type="entry name" value="OsmC/Ohr_fam"/>
</dbReference>
<dbReference type="InterPro" id="IPR036102">
    <property type="entry name" value="OsmC/Ohrsf"/>
</dbReference>
<dbReference type="NCBIfam" id="TIGR03561">
    <property type="entry name" value="organ_hyd_perox"/>
    <property type="match status" value="1"/>
</dbReference>
<dbReference type="PANTHER" id="PTHR33797">
    <property type="entry name" value="ORGANIC HYDROPEROXIDE RESISTANCE PROTEIN-LIKE"/>
    <property type="match status" value="1"/>
</dbReference>
<dbReference type="PANTHER" id="PTHR33797:SF2">
    <property type="entry name" value="ORGANIC HYDROPEROXIDE RESISTANCE PROTEIN-LIKE"/>
    <property type="match status" value="1"/>
</dbReference>
<dbReference type="Pfam" id="PF02566">
    <property type="entry name" value="OsmC"/>
    <property type="match status" value="1"/>
</dbReference>
<dbReference type="SUPFAM" id="SSF82784">
    <property type="entry name" value="OsmC-like"/>
    <property type="match status" value="1"/>
</dbReference>
<reference key="1">
    <citation type="journal article" date="2004" name="Proc. Natl. Acad. Sci. U.S.A.">
        <title>Complete genomes of two clinical Staphylococcus aureus strains: evidence for the rapid evolution of virulence and drug resistance.</title>
        <authorList>
            <person name="Holden M.T.G."/>
            <person name="Feil E.J."/>
            <person name="Lindsay J.A."/>
            <person name="Peacock S.J."/>
            <person name="Day N.P.J."/>
            <person name="Enright M.C."/>
            <person name="Foster T.J."/>
            <person name="Moore C.E."/>
            <person name="Hurst L."/>
            <person name="Atkin R."/>
            <person name="Barron A."/>
            <person name="Bason N."/>
            <person name="Bentley S.D."/>
            <person name="Chillingworth C."/>
            <person name="Chillingworth T."/>
            <person name="Churcher C."/>
            <person name="Clark L."/>
            <person name="Corton C."/>
            <person name="Cronin A."/>
            <person name="Doggett J."/>
            <person name="Dowd L."/>
            <person name="Feltwell T."/>
            <person name="Hance Z."/>
            <person name="Harris B."/>
            <person name="Hauser H."/>
            <person name="Holroyd S."/>
            <person name="Jagels K."/>
            <person name="James K.D."/>
            <person name="Lennard N."/>
            <person name="Line A."/>
            <person name="Mayes R."/>
            <person name="Moule S."/>
            <person name="Mungall K."/>
            <person name="Ormond D."/>
            <person name="Quail M.A."/>
            <person name="Rabbinowitsch E."/>
            <person name="Rutherford K.M."/>
            <person name="Sanders M."/>
            <person name="Sharp S."/>
            <person name="Simmonds M."/>
            <person name="Stevens K."/>
            <person name="Whitehead S."/>
            <person name="Barrell B.G."/>
            <person name="Spratt B.G."/>
            <person name="Parkhill J."/>
        </authorList>
    </citation>
    <scope>NUCLEOTIDE SEQUENCE [LARGE SCALE GENOMIC DNA]</scope>
    <source>
        <strain>MRSA252</strain>
    </source>
</reference>
<organism>
    <name type="scientific">Staphylococcus aureus (strain MRSA252)</name>
    <dbReference type="NCBI Taxonomy" id="282458"/>
    <lineage>
        <taxon>Bacteria</taxon>
        <taxon>Bacillati</taxon>
        <taxon>Bacillota</taxon>
        <taxon>Bacilli</taxon>
        <taxon>Bacillales</taxon>
        <taxon>Staphylococcaceae</taxon>
        <taxon>Staphylococcus</taxon>
    </lineage>
</organism>
<evidence type="ECO:0000305" key="1"/>
<accession>Q6GII8</accession>
<proteinExistence type="inferred from homology"/>